<reference key="1">
    <citation type="submission" date="2005-08" db="EMBL/GenBank/DDBJ databases">
        <authorList>
            <consortium name="NIH - Mammalian Gene Collection (MGC) project"/>
        </authorList>
    </citation>
    <scope>NUCLEOTIDE SEQUENCE [LARGE SCALE MRNA]</scope>
    <source>
        <strain>Crossbred X Angus</strain>
        <tissue>Liver</tissue>
    </source>
</reference>
<reference key="2">
    <citation type="journal article" date="2001" name="J. Biol. Chem.">
        <title>Structural compensation for the deficit of rRNA with proteins in the mammalian mitochondrial ribosome. Systematic analysis of protein components of the large ribosomal subunit from mammalian mitochondria.</title>
        <authorList>
            <person name="Suzuki T."/>
            <person name="Terasaki M."/>
            <person name="Takemoto-Hori C."/>
            <person name="Hanada T."/>
            <person name="Ueda T."/>
            <person name="Wada A."/>
            <person name="Watanabe K."/>
        </authorList>
    </citation>
    <scope>IDENTIFICATION BY MASS SPECTROMETRY</scope>
    <scope>SUBCELLULAR LOCATION</scope>
    <scope>SUBUNIT</scope>
</reference>
<reference key="3">
    <citation type="journal article" date="2010" name="J. Biol. Chem.">
        <title>Properties of the C-terminal tail of human mitochondrial inner membrane protein Oxa1L and its interactions with mammalian mitochondrial ribosomes.</title>
        <authorList>
            <person name="Haque M.E."/>
            <person name="Elmore K.B."/>
            <person name="Tripathy A."/>
            <person name="Koc H."/>
            <person name="Koc E.C."/>
            <person name="Spremulli L.L."/>
        </authorList>
    </citation>
    <scope>INTERACTION WITH OXA1L</scope>
    <scope>IDENTIFICATION BY MASS SPECTROMETRY</scope>
</reference>
<reference key="4">
    <citation type="journal article" date="2006" name="J. Mol. Biol.">
        <title>A structural model for the large subunit of the mammalian mitochondrial ribosome.</title>
        <authorList>
            <person name="Mears J.A."/>
            <person name="Sharma M.R."/>
            <person name="Gutell R.R."/>
            <person name="McCook A.S."/>
            <person name="Richardson P.E."/>
            <person name="Caulfield T.R."/>
            <person name="Agrawal R.K."/>
            <person name="Harvey S.C."/>
        </authorList>
    </citation>
    <scope>STRUCTURE BY ELECTRON MICROSCOPY (12 ANGSTROMS)</scope>
    <scope>SUBCELLULAR LOCATION</scope>
</reference>
<keyword id="KW-0002">3D-structure</keyword>
<keyword id="KW-0496">Mitochondrion</keyword>
<keyword id="KW-1185">Reference proteome</keyword>
<keyword id="KW-0687">Ribonucleoprotein</keyword>
<keyword id="KW-0689">Ribosomal protein</keyword>
<evidence type="ECO:0000269" key="1">
    <source>
    </source>
</evidence>
<evidence type="ECO:0000269" key="2">
    <source>
    </source>
</evidence>
<evidence type="ECO:0000269" key="3">
    <source>
    </source>
</evidence>
<evidence type="ECO:0000305" key="4"/>
<accession>Q3SYS1</accession>
<proteinExistence type="evidence at protein level"/>
<comment type="subunit">
    <text evidence="1 3">Component of the mitochondrial ribosome large subunit (39S) which comprises a 16S rRNA and about 50 distinct proteins (PubMed:11279069). Interacts with OXA1L (PubMed:20601428).</text>
</comment>
<comment type="subcellular location">
    <subcellularLocation>
        <location evidence="1 2">Mitochondrion</location>
    </subcellularLocation>
</comment>
<comment type="similarity">
    <text evidence="4">Belongs to the universal ribosomal protein uL13 family.</text>
</comment>
<organism>
    <name type="scientific">Bos taurus</name>
    <name type="common">Bovine</name>
    <dbReference type="NCBI Taxonomy" id="9913"/>
    <lineage>
        <taxon>Eukaryota</taxon>
        <taxon>Metazoa</taxon>
        <taxon>Chordata</taxon>
        <taxon>Craniata</taxon>
        <taxon>Vertebrata</taxon>
        <taxon>Euteleostomi</taxon>
        <taxon>Mammalia</taxon>
        <taxon>Eutheria</taxon>
        <taxon>Laurasiatheria</taxon>
        <taxon>Artiodactyla</taxon>
        <taxon>Ruminantia</taxon>
        <taxon>Pecora</taxon>
        <taxon>Bovidae</taxon>
        <taxon>Bovinae</taxon>
        <taxon>Bos</taxon>
    </lineage>
</organism>
<feature type="chain" id="PRO_0000230998" description="Large ribosomal subunit protein uL13m">
    <location>
        <begin position="1"/>
        <end position="178"/>
    </location>
</feature>
<name>RM13_BOVIN</name>
<gene>
    <name type="primary">MRPL13</name>
</gene>
<sequence>MASLSRAPQQWATFARVWYLLDGKMQPPGKLAALASVRLQGLHKPVYHQLSDCGDHVVIMNTRHIAFSGNKWEQKVYSSHTGYPGGFKQVTAAQLHRKDPVAIVKLAIYGMLPKNLHRRTLMQRLHLFPDEDIPEDILKNLTEELPQPRKVPRRLDEYTQEEIEAFPRVWSPPEDYRL</sequence>
<protein>
    <recommendedName>
        <fullName evidence="4">Large ribosomal subunit protein uL13m</fullName>
    </recommendedName>
    <alternativeName>
        <fullName>39S ribosomal protein L13, mitochondrial</fullName>
        <shortName>L13mt</shortName>
        <shortName>MRP-L13</shortName>
    </alternativeName>
</protein>
<dbReference type="EMBL" id="BC103423">
    <property type="protein sequence ID" value="AAI03424.1"/>
    <property type="molecule type" value="mRNA"/>
</dbReference>
<dbReference type="RefSeq" id="NP_001029977.1">
    <property type="nucleotide sequence ID" value="NM_001034805.2"/>
</dbReference>
<dbReference type="PDB" id="2FTC">
    <property type="method" value="EM"/>
    <property type="resolution" value="12.10 A"/>
    <property type="chains" value="H=1-148"/>
</dbReference>
<dbReference type="PDBsum" id="2FTC"/>
<dbReference type="SMR" id="Q3SYS1"/>
<dbReference type="FunCoup" id="Q3SYS1">
    <property type="interactions" value="2010"/>
</dbReference>
<dbReference type="STRING" id="9913.ENSBTAP00000008903"/>
<dbReference type="iPTMnet" id="Q3SYS1"/>
<dbReference type="PaxDb" id="9913-ENSBTAP00000008903"/>
<dbReference type="Ensembl" id="ENSBTAT00000008903.5">
    <property type="protein sequence ID" value="ENSBTAP00000008903.5"/>
    <property type="gene ID" value="ENSBTAG00000006767.5"/>
</dbReference>
<dbReference type="GeneID" id="617901"/>
<dbReference type="KEGG" id="bta:617901"/>
<dbReference type="CTD" id="28998"/>
<dbReference type="VEuPathDB" id="HostDB:ENSBTAG00000006767"/>
<dbReference type="VGNC" id="VGNC:31617">
    <property type="gene designation" value="MRPL13"/>
</dbReference>
<dbReference type="eggNOG" id="KOG3203">
    <property type="taxonomic scope" value="Eukaryota"/>
</dbReference>
<dbReference type="GeneTree" id="ENSGT00390000001515"/>
<dbReference type="HOGENOM" id="CLU_082184_1_3_1"/>
<dbReference type="InParanoid" id="Q3SYS1"/>
<dbReference type="OMA" id="HKPIYTP"/>
<dbReference type="OrthoDB" id="274622at2759"/>
<dbReference type="TreeFam" id="TF312914"/>
<dbReference type="Reactome" id="R-BTA-5389840">
    <property type="pathway name" value="Mitochondrial translation elongation"/>
</dbReference>
<dbReference type="Reactome" id="R-BTA-5419276">
    <property type="pathway name" value="Mitochondrial translation termination"/>
</dbReference>
<dbReference type="EvolutionaryTrace" id="Q3SYS1"/>
<dbReference type="Proteomes" id="UP000009136">
    <property type="component" value="Chromosome 14"/>
</dbReference>
<dbReference type="Bgee" id="ENSBTAG00000006767">
    <property type="expression patterns" value="Expressed in tongue muscle and 106 other cell types or tissues"/>
</dbReference>
<dbReference type="GO" id="GO:0005743">
    <property type="term" value="C:mitochondrial inner membrane"/>
    <property type="evidence" value="ECO:0000304"/>
    <property type="project" value="Reactome"/>
</dbReference>
<dbReference type="GO" id="GO:0005762">
    <property type="term" value="C:mitochondrial large ribosomal subunit"/>
    <property type="evidence" value="ECO:0000250"/>
    <property type="project" value="UniProtKB"/>
</dbReference>
<dbReference type="GO" id="GO:0005761">
    <property type="term" value="C:mitochondrial ribosome"/>
    <property type="evidence" value="ECO:0000250"/>
    <property type="project" value="UniProtKB"/>
</dbReference>
<dbReference type="GO" id="GO:0005840">
    <property type="term" value="C:ribosome"/>
    <property type="evidence" value="ECO:0000318"/>
    <property type="project" value="GO_Central"/>
</dbReference>
<dbReference type="GO" id="GO:0003729">
    <property type="term" value="F:mRNA binding"/>
    <property type="evidence" value="ECO:0000318"/>
    <property type="project" value="GO_Central"/>
</dbReference>
<dbReference type="GO" id="GO:0003735">
    <property type="term" value="F:structural constituent of ribosome"/>
    <property type="evidence" value="ECO:0000318"/>
    <property type="project" value="GO_Central"/>
</dbReference>
<dbReference type="GO" id="GO:0017148">
    <property type="term" value="P:negative regulation of translation"/>
    <property type="evidence" value="ECO:0000318"/>
    <property type="project" value="GO_Central"/>
</dbReference>
<dbReference type="GO" id="GO:0006412">
    <property type="term" value="P:translation"/>
    <property type="evidence" value="ECO:0007669"/>
    <property type="project" value="InterPro"/>
</dbReference>
<dbReference type="CDD" id="cd00392">
    <property type="entry name" value="Ribosomal_L13"/>
    <property type="match status" value="1"/>
</dbReference>
<dbReference type="FunFam" id="3.90.1180.10:FF:000030">
    <property type="entry name" value="39S ribosomal protein L13, mitochondrial"/>
    <property type="match status" value="1"/>
</dbReference>
<dbReference type="Gene3D" id="3.90.1180.10">
    <property type="entry name" value="Ribosomal protein L13"/>
    <property type="match status" value="1"/>
</dbReference>
<dbReference type="HAMAP" id="MF_01366">
    <property type="entry name" value="Ribosomal_uL13"/>
    <property type="match status" value="1"/>
</dbReference>
<dbReference type="InterPro" id="IPR005822">
    <property type="entry name" value="Ribosomal_uL13"/>
</dbReference>
<dbReference type="InterPro" id="IPR005823">
    <property type="entry name" value="Ribosomal_uL13_bac-type"/>
</dbReference>
<dbReference type="InterPro" id="IPR023563">
    <property type="entry name" value="Ribosomal_uL13_CS"/>
</dbReference>
<dbReference type="InterPro" id="IPR036899">
    <property type="entry name" value="Ribosomal_uL13_sf"/>
</dbReference>
<dbReference type="NCBIfam" id="TIGR01066">
    <property type="entry name" value="rplM_bact"/>
    <property type="match status" value="1"/>
</dbReference>
<dbReference type="PANTHER" id="PTHR11545:SF2">
    <property type="entry name" value="LARGE RIBOSOMAL SUBUNIT PROTEIN UL13M"/>
    <property type="match status" value="1"/>
</dbReference>
<dbReference type="PANTHER" id="PTHR11545">
    <property type="entry name" value="RIBOSOMAL PROTEIN L13"/>
    <property type="match status" value="1"/>
</dbReference>
<dbReference type="Pfam" id="PF00572">
    <property type="entry name" value="Ribosomal_L13"/>
    <property type="match status" value="1"/>
</dbReference>
<dbReference type="PIRSF" id="PIRSF002181">
    <property type="entry name" value="Ribosomal_L13"/>
    <property type="match status" value="1"/>
</dbReference>
<dbReference type="SUPFAM" id="SSF52161">
    <property type="entry name" value="Ribosomal protein L13"/>
    <property type="match status" value="1"/>
</dbReference>
<dbReference type="PROSITE" id="PS00783">
    <property type="entry name" value="RIBOSOMAL_L13"/>
    <property type="match status" value="1"/>
</dbReference>